<protein>
    <recommendedName>
        <fullName>ATP synthase subunit 9, mitochondrial</fullName>
    </recommendedName>
    <alternativeName>
        <fullName>Lipid-binding protein</fullName>
    </alternativeName>
</protein>
<keyword id="KW-0138">CF(0)</keyword>
<keyword id="KW-0375">Hydrogen ion transport</keyword>
<keyword id="KW-0406">Ion transport</keyword>
<keyword id="KW-0446">Lipid-binding</keyword>
<keyword id="KW-0472">Membrane</keyword>
<keyword id="KW-0496">Mitochondrion</keyword>
<keyword id="KW-1185">Reference proteome</keyword>
<keyword id="KW-0812">Transmembrane</keyword>
<keyword id="KW-1133">Transmembrane helix</keyword>
<keyword id="KW-0813">Transport</keyword>
<proteinExistence type="inferred from homology"/>
<geneLocation type="mitochondrion"/>
<reference key="1">
    <citation type="book" date="1993" name="Genetic Maps (6th edition)">
        <title>The mitochondrial genome of Schizosaccharomyces pombe.</title>
        <editorList>
            <person name="O'Brien S.J."/>
        </editorList>
        <authorList>
            <person name="Lang B.F."/>
        </authorList>
    </citation>
    <scope>NUCLEOTIDE SEQUENCE [LARGE SCALE GENOMIC DNA]</scope>
    <source>
        <strain>AD7-50</strain>
    </source>
</reference>
<feature type="chain" id="PRO_0000112235" description="ATP synthase subunit 9, mitochondrial">
    <location>
        <begin position="1"/>
        <end position="74"/>
    </location>
</feature>
<feature type="transmembrane region" description="Helical" evidence="2">
    <location>
        <begin position="8"/>
        <end position="28"/>
    </location>
</feature>
<feature type="transmembrane region" description="Helical" evidence="2">
    <location>
        <begin position="50"/>
        <end position="70"/>
    </location>
</feature>
<feature type="site" description="Reversibly protonated during proton transport" evidence="1">
    <location>
        <position position="57"/>
    </location>
</feature>
<comment type="function">
    <text>Mitochondrial membrane ATP synthase (F(1)F(0) ATP synthase or Complex V) produces ATP from ADP in the presence of a proton gradient across the membrane which is generated by electron transport complexes of the respiratory chain. F-type ATPases consist of two structural domains, F(1) - containing the extramembraneous catalytic core and F(0) - containing the membrane proton channel, linked together by a central stalk and a peripheral stalk. During catalysis, ATP synthesis in the catalytic domain of F(1) is coupled via a rotary mechanism of the central stalk subunits to proton translocation. Part of the complex F(0) domain. A homomeric c-ring of probably 10 subunits is part of the complex rotary element.</text>
</comment>
<comment type="subunit">
    <text>F-type ATPases have 2 components, CF(1) - the catalytic core - and CF(0) - the membrane proton channel. CF(1) has five subunits: alpha(3), beta(3), gamma(1), delta(1), epsilon(1). CF(0) has three main subunits: a, b and c.</text>
</comment>
<comment type="subcellular location">
    <subcellularLocation>
        <location evidence="3">Mitochondrion membrane</location>
        <topology evidence="3">Multi-pass membrane protein</topology>
    </subcellularLocation>
</comment>
<comment type="similarity">
    <text evidence="3">Belongs to the ATPase C chain family.</text>
</comment>
<name>ATP9_SCHPO</name>
<dbReference type="EMBL" id="X54421">
    <property type="protein sequence ID" value="CAA38292.1"/>
    <property type="molecule type" value="Genomic_DNA"/>
</dbReference>
<dbReference type="PIR" id="S78203">
    <property type="entry name" value="S78203"/>
</dbReference>
<dbReference type="RefSeq" id="NP_039507.1">
    <property type="nucleotide sequence ID" value="NC_001326.1"/>
</dbReference>
<dbReference type="SMR" id="P21537"/>
<dbReference type="ComplexPortal" id="CPX-25764">
    <property type="entry name" value="Mitochondrial proton translocating ATP synthase complex"/>
</dbReference>
<dbReference type="FunCoup" id="P21537">
    <property type="interactions" value="83"/>
</dbReference>
<dbReference type="STRING" id="284812.P21537"/>
<dbReference type="PaxDb" id="4896-SPMIT.10.1"/>
<dbReference type="EnsemblFungi" id="SPMIT.10.1">
    <property type="protein sequence ID" value="SPMIT.10.1:pep"/>
    <property type="gene ID" value="SPMIT.10"/>
</dbReference>
<dbReference type="PomBase" id="SPMIT.10">
    <property type="gene designation" value="atp9"/>
</dbReference>
<dbReference type="VEuPathDB" id="FungiDB:SPMIT.10"/>
<dbReference type="eggNOG" id="KOG3025">
    <property type="taxonomic scope" value="Eukaryota"/>
</dbReference>
<dbReference type="HOGENOM" id="CLU_148047_4_1_1"/>
<dbReference type="InParanoid" id="P21537"/>
<dbReference type="OMA" id="YIFGKMI"/>
<dbReference type="PhylomeDB" id="P21537"/>
<dbReference type="PRO" id="PR:P21537"/>
<dbReference type="Proteomes" id="UP000002485">
    <property type="component" value="Mitochondrion"/>
</dbReference>
<dbReference type="GO" id="GO:0099617">
    <property type="term" value="C:matrix side of mitochondrial inner membrane"/>
    <property type="evidence" value="ECO:0000305"/>
    <property type="project" value="PomBase"/>
</dbReference>
<dbReference type="GO" id="GO:0045259">
    <property type="term" value="C:proton-transporting ATP synthase complex"/>
    <property type="evidence" value="ECO:0007669"/>
    <property type="project" value="UniProtKB-KW"/>
</dbReference>
<dbReference type="GO" id="GO:0033177">
    <property type="term" value="C:proton-transporting two-sector ATPase complex, proton-transporting domain"/>
    <property type="evidence" value="ECO:0007669"/>
    <property type="project" value="InterPro"/>
</dbReference>
<dbReference type="GO" id="GO:0008289">
    <property type="term" value="F:lipid binding"/>
    <property type="evidence" value="ECO:0007669"/>
    <property type="project" value="UniProtKB-KW"/>
</dbReference>
<dbReference type="GO" id="GO:0015078">
    <property type="term" value="F:proton transmembrane transporter activity"/>
    <property type="evidence" value="ECO:0007669"/>
    <property type="project" value="InterPro"/>
</dbReference>
<dbReference type="GO" id="GO:0015986">
    <property type="term" value="P:proton motive force-driven ATP synthesis"/>
    <property type="evidence" value="ECO:0000318"/>
    <property type="project" value="GO_Central"/>
</dbReference>
<dbReference type="GO" id="GO:0042776">
    <property type="term" value="P:proton motive force-driven mitochondrial ATP synthesis"/>
    <property type="evidence" value="ECO:0000266"/>
    <property type="project" value="PomBase"/>
</dbReference>
<dbReference type="CDD" id="cd18182">
    <property type="entry name" value="ATP-synt_Fo_c_ATP5G3"/>
    <property type="match status" value="1"/>
</dbReference>
<dbReference type="FunFam" id="1.20.20.10:FF:000003">
    <property type="entry name" value="Atp synthase f complex subunit mitochondrial"/>
    <property type="match status" value="1"/>
</dbReference>
<dbReference type="Gene3D" id="1.20.20.10">
    <property type="entry name" value="F1F0 ATP synthase subunit C"/>
    <property type="match status" value="1"/>
</dbReference>
<dbReference type="HAMAP" id="MF_01396">
    <property type="entry name" value="ATP_synth_c_bact"/>
    <property type="match status" value="1"/>
</dbReference>
<dbReference type="InterPro" id="IPR000454">
    <property type="entry name" value="ATP_synth_F0_csu"/>
</dbReference>
<dbReference type="InterPro" id="IPR020537">
    <property type="entry name" value="ATP_synth_F0_csu_DDCD_BS"/>
</dbReference>
<dbReference type="InterPro" id="IPR038662">
    <property type="entry name" value="ATP_synth_F0_csu_sf"/>
</dbReference>
<dbReference type="InterPro" id="IPR002379">
    <property type="entry name" value="ATPase_proteolipid_c-like_dom"/>
</dbReference>
<dbReference type="InterPro" id="IPR035921">
    <property type="entry name" value="F/V-ATP_Csub_sf"/>
</dbReference>
<dbReference type="NCBIfam" id="NF005733">
    <property type="entry name" value="PRK07558.1"/>
    <property type="match status" value="1"/>
</dbReference>
<dbReference type="PANTHER" id="PTHR10031">
    <property type="entry name" value="ATP SYNTHASE LIPID-BINDING PROTEIN, MITOCHONDRIAL"/>
    <property type="match status" value="1"/>
</dbReference>
<dbReference type="PANTHER" id="PTHR10031:SF0">
    <property type="entry name" value="ATPASE PROTEIN 9"/>
    <property type="match status" value="1"/>
</dbReference>
<dbReference type="Pfam" id="PF00137">
    <property type="entry name" value="ATP-synt_C"/>
    <property type="match status" value="1"/>
</dbReference>
<dbReference type="PRINTS" id="PR00124">
    <property type="entry name" value="ATPASEC"/>
</dbReference>
<dbReference type="SUPFAM" id="SSF81333">
    <property type="entry name" value="F1F0 ATP synthase subunit C"/>
    <property type="match status" value="1"/>
</dbReference>
<dbReference type="PROSITE" id="PS00605">
    <property type="entry name" value="ATPASE_C"/>
    <property type="match status" value="1"/>
</dbReference>
<gene>
    <name type="primary">atp9</name>
    <name type="ORF">SPMIT.10</name>
</gene>
<evidence type="ECO:0000250" key="1"/>
<evidence type="ECO:0000255" key="2"/>
<evidence type="ECO:0000305" key="3"/>
<organism>
    <name type="scientific">Schizosaccharomyces pombe (strain 972 / ATCC 24843)</name>
    <name type="common">Fission yeast</name>
    <dbReference type="NCBI Taxonomy" id="284812"/>
    <lineage>
        <taxon>Eukaryota</taxon>
        <taxon>Fungi</taxon>
        <taxon>Dikarya</taxon>
        <taxon>Ascomycota</taxon>
        <taxon>Taphrinomycotina</taxon>
        <taxon>Schizosaccharomycetes</taxon>
        <taxon>Schizosaccharomycetales</taxon>
        <taxon>Schizosaccharomycetaceae</taxon>
        <taxon>Schizosaccharomyces</taxon>
    </lineage>
</organism>
<accession>P21537</accession>
<sequence>MIQAAKYIGAGLATIGVSGAGVGIGLIFSNLISGTSRNPSVRPHLFSMAILGFALTEATGLFCLMLAFLIIYAA</sequence>